<feature type="transit peptide" description="Mitochondrion" evidence="3">
    <location>
        <begin position="1"/>
        <end position="27"/>
    </location>
</feature>
<feature type="chain" id="PRO_0000261658" description="Large ribosomal subunit protein mL48">
    <location>
        <begin position="28"/>
        <end position="211"/>
    </location>
</feature>
<feature type="modified residue" description="N6-succinyllysine" evidence="5">
    <location>
        <position position="198"/>
    </location>
</feature>
<evidence type="ECO:0000250" key="1">
    <source>
        <dbReference type="UniProtKB" id="Q2YDI5"/>
    </source>
</evidence>
<evidence type="ECO:0000250" key="2">
    <source>
        <dbReference type="UniProtKB" id="Q96GC5"/>
    </source>
</evidence>
<evidence type="ECO:0000255" key="3"/>
<evidence type="ECO:0000305" key="4"/>
<evidence type="ECO:0007744" key="5">
    <source>
    </source>
</evidence>
<dbReference type="EMBL" id="AK171917">
    <property type="protein sequence ID" value="BAE42732.1"/>
    <property type="molecule type" value="mRNA"/>
</dbReference>
<dbReference type="EMBL" id="BC037190">
    <property type="protein sequence ID" value="AAH37190.1"/>
    <property type="molecule type" value="mRNA"/>
</dbReference>
<dbReference type="EMBL" id="BC096562">
    <property type="protein sequence ID" value="AAH96562.1"/>
    <property type="status" value="ALT_INIT"/>
    <property type="molecule type" value="mRNA"/>
</dbReference>
<dbReference type="CCDS" id="CCDS21502.2"/>
<dbReference type="RefSeq" id="NP_942128.2">
    <property type="nucleotide sequence ID" value="NM_198831.2"/>
</dbReference>
<dbReference type="SMR" id="Q8JZS9"/>
<dbReference type="BioGRID" id="206587">
    <property type="interactions" value="22"/>
</dbReference>
<dbReference type="ComplexPortal" id="CPX-5302">
    <property type="entry name" value="39S mitochondrial large ribosomal subunit"/>
</dbReference>
<dbReference type="FunCoup" id="Q8JZS9">
    <property type="interactions" value="744"/>
</dbReference>
<dbReference type="STRING" id="10090.ENSMUSP00000116090"/>
<dbReference type="iPTMnet" id="Q8JZS9"/>
<dbReference type="PhosphoSitePlus" id="Q8JZS9"/>
<dbReference type="PaxDb" id="10090-ENSMUSP00000116090"/>
<dbReference type="ProteomicsDB" id="260982"/>
<dbReference type="Pumba" id="Q8JZS9"/>
<dbReference type="DNASU" id="52443"/>
<dbReference type="GeneID" id="52443"/>
<dbReference type="KEGG" id="mmu:52443"/>
<dbReference type="AGR" id="MGI:1289321"/>
<dbReference type="CTD" id="51642"/>
<dbReference type="MGI" id="MGI:1289321">
    <property type="gene designation" value="Mrpl48"/>
</dbReference>
<dbReference type="eggNOG" id="KOG4060">
    <property type="taxonomic scope" value="Eukaryota"/>
</dbReference>
<dbReference type="InParanoid" id="Q8JZS9"/>
<dbReference type="OrthoDB" id="5984298at2759"/>
<dbReference type="PhylomeDB" id="Q8JZS9"/>
<dbReference type="Reactome" id="R-MMU-5389840">
    <property type="pathway name" value="Mitochondrial translation elongation"/>
</dbReference>
<dbReference type="Reactome" id="R-MMU-5419276">
    <property type="pathway name" value="Mitochondrial translation termination"/>
</dbReference>
<dbReference type="BioGRID-ORCS" id="52443">
    <property type="hits" value="20 hits in 76 CRISPR screens"/>
</dbReference>
<dbReference type="ChiTaRS" id="Mrpl48">
    <property type="organism name" value="mouse"/>
</dbReference>
<dbReference type="PRO" id="PR:Q8JZS9"/>
<dbReference type="Proteomes" id="UP000000589">
    <property type="component" value="Unplaced"/>
</dbReference>
<dbReference type="RNAct" id="Q8JZS9">
    <property type="molecule type" value="protein"/>
</dbReference>
<dbReference type="GO" id="GO:0005743">
    <property type="term" value="C:mitochondrial inner membrane"/>
    <property type="evidence" value="ECO:0000303"/>
    <property type="project" value="ComplexPortal"/>
</dbReference>
<dbReference type="GO" id="GO:0005762">
    <property type="term" value="C:mitochondrial large ribosomal subunit"/>
    <property type="evidence" value="ECO:0000250"/>
    <property type="project" value="UniProtKB"/>
</dbReference>
<dbReference type="GO" id="GO:0005761">
    <property type="term" value="C:mitochondrial ribosome"/>
    <property type="evidence" value="ECO:0000250"/>
    <property type="project" value="UniProtKB"/>
</dbReference>
<dbReference type="GO" id="GO:0005739">
    <property type="term" value="C:mitochondrion"/>
    <property type="evidence" value="ECO:0007005"/>
    <property type="project" value="MGI"/>
</dbReference>
<dbReference type="GO" id="GO:0032543">
    <property type="term" value="P:mitochondrial translation"/>
    <property type="evidence" value="ECO:0000303"/>
    <property type="project" value="ComplexPortal"/>
</dbReference>
<dbReference type="FunFam" id="3.30.70.600:FF:000006">
    <property type="entry name" value="39S ribosomal protein L48, mitochondrial"/>
    <property type="match status" value="1"/>
</dbReference>
<dbReference type="Gene3D" id="3.30.70.600">
    <property type="entry name" value="Ribosomal protein S10 domain"/>
    <property type="match status" value="1"/>
</dbReference>
<dbReference type="InterPro" id="IPR027487">
    <property type="entry name" value="Ribosomal_mL48"/>
</dbReference>
<dbReference type="InterPro" id="IPR027486">
    <property type="entry name" value="Ribosomal_uS10_dom"/>
</dbReference>
<dbReference type="InterPro" id="IPR036838">
    <property type="entry name" value="Ribosomal_uS10_dom_sf"/>
</dbReference>
<dbReference type="PANTHER" id="PTHR13473:SF0">
    <property type="entry name" value="LARGE RIBOSOMAL SUBUNIT PROTEIN ML48"/>
    <property type="match status" value="1"/>
</dbReference>
<dbReference type="PANTHER" id="PTHR13473">
    <property type="entry name" value="MITOCHONDRIAL RIBOSOMAL PROTEIN L48"/>
    <property type="match status" value="1"/>
</dbReference>
<dbReference type="Pfam" id="PF00338">
    <property type="entry name" value="Ribosomal_S10"/>
    <property type="match status" value="1"/>
</dbReference>
<dbReference type="SMART" id="SM01403">
    <property type="entry name" value="Ribosomal_S10"/>
    <property type="match status" value="1"/>
</dbReference>
<dbReference type="SUPFAM" id="SSF54999">
    <property type="entry name" value="Ribosomal protein S10"/>
    <property type="match status" value="1"/>
</dbReference>
<sequence>MSGTLGKVLGVWTNTVSKQGFSLLRFRSLGENPIFSAGGILWTSRHYKTKPTHGIGRYRHLVKVQEPKKKKAKVELRAINVGTDYEYGVLNIHLTAYDMSLAESYAQYVHRLCNRLSIKVEESYAMPTKTMEVMRLPDQGNKMVLDSVLTTHERVVQISGLSATFAEIFLEVLQSNLPEGVRLSVREHTEEDFKGRFKARPELEELLAKLN</sequence>
<gene>
    <name type="primary">Mrpl48</name>
</gene>
<keyword id="KW-0496">Mitochondrion</keyword>
<keyword id="KW-1185">Reference proteome</keyword>
<keyword id="KW-0687">Ribonucleoprotein</keyword>
<keyword id="KW-0689">Ribosomal protein</keyword>
<keyword id="KW-0809">Transit peptide</keyword>
<proteinExistence type="evidence at protein level"/>
<organism>
    <name type="scientific">Mus musculus</name>
    <name type="common">Mouse</name>
    <dbReference type="NCBI Taxonomy" id="10090"/>
    <lineage>
        <taxon>Eukaryota</taxon>
        <taxon>Metazoa</taxon>
        <taxon>Chordata</taxon>
        <taxon>Craniata</taxon>
        <taxon>Vertebrata</taxon>
        <taxon>Euteleostomi</taxon>
        <taxon>Mammalia</taxon>
        <taxon>Eutheria</taxon>
        <taxon>Euarchontoglires</taxon>
        <taxon>Glires</taxon>
        <taxon>Rodentia</taxon>
        <taxon>Myomorpha</taxon>
        <taxon>Muroidea</taxon>
        <taxon>Muridae</taxon>
        <taxon>Murinae</taxon>
        <taxon>Mus</taxon>
        <taxon>Mus</taxon>
    </lineage>
</organism>
<comment type="subunit">
    <text evidence="1 2">Component of the mitochondrial ribosome large subunit (39S) which comprises a 16S rRNA and about 50 distinct proteins (By similarity). Interacts with OXA1L (By similarity).</text>
</comment>
<comment type="subcellular location">
    <subcellularLocation>
        <location evidence="2">Mitochondrion</location>
    </subcellularLocation>
</comment>
<comment type="similarity">
    <text evidence="4">Belongs to the mitochondrion-specific ribosomal protein mL48 family.</text>
</comment>
<comment type="sequence caution" evidence="4">
    <conflict type="erroneous initiation">
        <sequence resource="EMBL-CDS" id="AAH96562"/>
    </conflict>
</comment>
<comment type="sequence caution" evidence="4">
    <conflict type="miscellaneous discrepancy">
        <sequence resource="EMBL-CDS" id="AAH96562"/>
    </conflict>
    <text>Contaminating sequence. Vector contamination at the N-terminus.</text>
</comment>
<protein>
    <recommendedName>
        <fullName evidence="4">Large ribosomal subunit protein mL48</fullName>
    </recommendedName>
    <alternativeName>
        <fullName>39S ribosomal protein L48, mitochondrial</fullName>
        <shortName>L48mt</shortName>
        <shortName>MRP-L48</shortName>
    </alternativeName>
</protein>
<accession>Q8JZS9</accession>
<accession>Q4VA35</accession>
<reference key="1">
    <citation type="journal article" date="2005" name="Science">
        <title>The transcriptional landscape of the mammalian genome.</title>
        <authorList>
            <person name="Carninci P."/>
            <person name="Kasukawa T."/>
            <person name="Katayama S."/>
            <person name="Gough J."/>
            <person name="Frith M.C."/>
            <person name="Maeda N."/>
            <person name="Oyama R."/>
            <person name="Ravasi T."/>
            <person name="Lenhard B."/>
            <person name="Wells C."/>
            <person name="Kodzius R."/>
            <person name="Shimokawa K."/>
            <person name="Bajic V.B."/>
            <person name="Brenner S.E."/>
            <person name="Batalov S."/>
            <person name="Forrest A.R."/>
            <person name="Zavolan M."/>
            <person name="Davis M.J."/>
            <person name="Wilming L.G."/>
            <person name="Aidinis V."/>
            <person name="Allen J.E."/>
            <person name="Ambesi-Impiombato A."/>
            <person name="Apweiler R."/>
            <person name="Aturaliya R.N."/>
            <person name="Bailey T.L."/>
            <person name="Bansal M."/>
            <person name="Baxter L."/>
            <person name="Beisel K.W."/>
            <person name="Bersano T."/>
            <person name="Bono H."/>
            <person name="Chalk A.M."/>
            <person name="Chiu K.P."/>
            <person name="Choudhary V."/>
            <person name="Christoffels A."/>
            <person name="Clutterbuck D.R."/>
            <person name="Crowe M.L."/>
            <person name="Dalla E."/>
            <person name="Dalrymple B.P."/>
            <person name="de Bono B."/>
            <person name="Della Gatta G."/>
            <person name="di Bernardo D."/>
            <person name="Down T."/>
            <person name="Engstrom P."/>
            <person name="Fagiolini M."/>
            <person name="Faulkner G."/>
            <person name="Fletcher C.F."/>
            <person name="Fukushima T."/>
            <person name="Furuno M."/>
            <person name="Futaki S."/>
            <person name="Gariboldi M."/>
            <person name="Georgii-Hemming P."/>
            <person name="Gingeras T.R."/>
            <person name="Gojobori T."/>
            <person name="Green R.E."/>
            <person name="Gustincich S."/>
            <person name="Harbers M."/>
            <person name="Hayashi Y."/>
            <person name="Hensch T.K."/>
            <person name="Hirokawa N."/>
            <person name="Hill D."/>
            <person name="Huminiecki L."/>
            <person name="Iacono M."/>
            <person name="Ikeo K."/>
            <person name="Iwama A."/>
            <person name="Ishikawa T."/>
            <person name="Jakt M."/>
            <person name="Kanapin A."/>
            <person name="Katoh M."/>
            <person name="Kawasawa Y."/>
            <person name="Kelso J."/>
            <person name="Kitamura H."/>
            <person name="Kitano H."/>
            <person name="Kollias G."/>
            <person name="Krishnan S.P."/>
            <person name="Kruger A."/>
            <person name="Kummerfeld S.K."/>
            <person name="Kurochkin I.V."/>
            <person name="Lareau L.F."/>
            <person name="Lazarevic D."/>
            <person name="Lipovich L."/>
            <person name="Liu J."/>
            <person name="Liuni S."/>
            <person name="McWilliam S."/>
            <person name="Madan Babu M."/>
            <person name="Madera M."/>
            <person name="Marchionni L."/>
            <person name="Matsuda H."/>
            <person name="Matsuzawa S."/>
            <person name="Miki H."/>
            <person name="Mignone F."/>
            <person name="Miyake S."/>
            <person name="Morris K."/>
            <person name="Mottagui-Tabar S."/>
            <person name="Mulder N."/>
            <person name="Nakano N."/>
            <person name="Nakauchi H."/>
            <person name="Ng P."/>
            <person name="Nilsson R."/>
            <person name="Nishiguchi S."/>
            <person name="Nishikawa S."/>
            <person name="Nori F."/>
            <person name="Ohara O."/>
            <person name="Okazaki Y."/>
            <person name="Orlando V."/>
            <person name="Pang K.C."/>
            <person name="Pavan W.J."/>
            <person name="Pavesi G."/>
            <person name="Pesole G."/>
            <person name="Petrovsky N."/>
            <person name="Piazza S."/>
            <person name="Reed J."/>
            <person name="Reid J.F."/>
            <person name="Ring B.Z."/>
            <person name="Ringwald M."/>
            <person name="Rost B."/>
            <person name="Ruan Y."/>
            <person name="Salzberg S.L."/>
            <person name="Sandelin A."/>
            <person name="Schneider C."/>
            <person name="Schoenbach C."/>
            <person name="Sekiguchi K."/>
            <person name="Semple C.A."/>
            <person name="Seno S."/>
            <person name="Sessa L."/>
            <person name="Sheng Y."/>
            <person name="Shibata Y."/>
            <person name="Shimada H."/>
            <person name="Shimada K."/>
            <person name="Silva D."/>
            <person name="Sinclair B."/>
            <person name="Sperling S."/>
            <person name="Stupka E."/>
            <person name="Sugiura K."/>
            <person name="Sultana R."/>
            <person name="Takenaka Y."/>
            <person name="Taki K."/>
            <person name="Tammoja K."/>
            <person name="Tan S.L."/>
            <person name="Tang S."/>
            <person name="Taylor M.S."/>
            <person name="Tegner J."/>
            <person name="Teichmann S.A."/>
            <person name="Ueda H.R."/>
            <person name="van Nimwegen E."/>
            <person name="Verardo R."/>
            <person name="Wei C.L."/>
            <person name="Yagi K."/>
            <person name="Yamanishi H."/>
            <person name="Zabarovsky E."/>
            <person name="Zhu S."/>
            <person name="Zimmer A."/>
            <person name="Hide W."/>
            <person name="Bult C."/>
            <person name="Grimmond S.M."/>
            <person name="Teasdale R.D."/>
            <person name="Liu E.T."/>
            <person name="Brusic V."/>
            <person name="Quackenbush J."/>
            <person name="Wahlestedt C."/>
            <person name="Mattick J.S."/>
            <person name="Hume D.A."/>
            <person name="Kai C."/>
            <person name="Sasaki D."/>
            <person name="Tomaru Y."/>
            <person name="Fukuda S."/>
            <person name="Kanamori-Katayama M."/>
            <person name="Suzuki M."/>
            <person name="Aoki J."/>
            <person name="Arakawa T."/>
            <person name="Iida J."/>
            <person name="Imamura K."/>
            <person name="Itoh M."/>
            <person name="Kato T."/>
            <person name="Kawaji H."/>
            <person name="Kawagashira N."/>
            <person name="Kawashima T."/>
            <person name="Kojima M."/>
            <person name="Kondo S."/>
            <person name="Konno H."/>
            <person name="Nakano K."/>
            <person name="Ninomiya N."/>
            <person name="Nishio T."/>
            <person name="Okada M."/>
            <person name="Plessy C."/>
            <person name="Shibata K."/>
            <person name="Shiraki T."/>
            <person name="Suzuki S."/>
            <person name="Tagami M."/>
            <person name="Waki K."/>
            <person name="Watahiki A."/>
            <person name="Okamura-Oho Y."/>
            <person name="Suzuki H."/>
            <person name="Kawai J."/>
            <person name="Hayashizaki Y."/>
        </authorList>
    </citation>
    <scope>NUCLEOTIDE SEQUENCE [LARGE SCALE MRNA]</scope>
    <source>
        <strain>NOD</strain>
        <tissue>Spleen</tissue>
    </source>
</reference>
<reference key="2">
    <citation type="journal article" date="2004" name="Genome Res.">
        <title>The status, quality, and expansion of the NIH full-length cDNA project: the Mammalian Gene Collection (MGC).</title>
        <authorList>
            <consortium name="The MGC Project Team"/>
        </authorList>
    </citation>
    <scope>NUCLEOTIDE SEQUENCE [LARGE SCALE MRNA]</scope>
    <source>
        <strain>FVB/N</strain>
        <tissue>Mammary gland</tissue>
        <tissue>Salivary gland</tissue>
    </source>
</reference>
<reference key="3">
    <citation type="journal article" date="2010" name="Cell">
        <title>A tissue-specific atlas of mouse protein phosphorylation and expression.</title>
        <authorList>
            <person name="Huttlin E.L."/>
            <person name="Jedrychowski M.P."/>
            <person name="Elias J.E."/>
            <person name="Goswami T."/>
            <person name="Rad R."/>
            <person name="Beausoleil S.A."/>
            <person name="Villen J."/>
            <person name="Haas W."/>
            <person name="Sowa M.E."/>
            <person name="Gygi S.P."/>
        </authorList>
    </citation>
    <scope>IDENTIFICATION BY MASS SPECTROMETRY [LARGE SCALE ANALYSIS]</scope>
    <source>
        <tissue>Brown adipose tissue</tissue>
        <tissue>Heart</tissue>
        <tissue>Kidney</tissue>
        <tissue>Liver</tissue>
        <tissue>Spleen</tissue>
        <tissue>Testis</tissue>
    </source>
</reference>
<reference key="4">
    <citation type="journal article" date="2013" name="Mol. Cell">
        <title>SIRT5-mediated lysine desuccinylation impacts diverse metabolic pathways.</title>
        <authorList>
            <person name="Park J."/>
            <person name="Chen Y."/>
            <person name="Tishkoff D.X."/>
            <person name="Peng C."/>
            <person name="Tan M."/>
            <person name="Dai L."/>
            <person name="Xie Z."/>
            <person name="Zhang Y."/>
            <person name="Zwaans B.M."/>
            <person name="Skinner M.E."/>
            <person name="Lombard D.B."/>
            <person name="Zhao Y."/>
        </authorList>
    </citation>
    <scope>SUCCINYLATION [LARGE SCALE ANALYSIS] AT LYS-198</scope>
    <scope>IDENTIFICATION BY MASS SPECTROMETRY [LARGE SCALE ANALYSIS]</scope>
    <source>
        <tissue>Liver</tissue>
    </source>
</reference>
<name>RM48_MOUSE</name>